<gene>
    <name type="primary">rho</name>
</gene>
<keyword id="KW-0966">Cell projection</keyword>
<keyword id="KW-0157">Chromophore</keyword>
<keyword id="KW-1015">Disulfide bond</keyword>
<keyword id="KW-0297">G-protein coupled receptor</keyword>
<keyword id="KW-0449">Lipoprotein</keyword>
<keyword id="KW-0472">Membrane</keyword>
<keyword id="KW-0564">Palmitate</keyword>
<keyword id="KW-0597">Phosphoprotein</keyword>
<keyword id="KW-0600">Photoreceptor protein</keyword>
<keyword id="KW-0675">Receptor</keyword>
<keyword id="KW-0681">Retinal protein</keyword>
<keyword id="KW-0716">Sensory transduction</keyword>
<keyword id="KW-0807">Transducer</keyword>
<keyword id="KW-0812">Transmembrane</keyword>
<keyword id="KW-1133">Transmembrane helix</keyword>
<keyword id="KW-0844">Vision</keyword>
<accession>O42327</accession>
<comment type="function">
    <text evidence="1 2 3">Photoreceptor required for image-forming vision at low light intensity. While most salt water fish species use retinal as chromophore, most freshwater fish use 3-dehydroretinal, or a mixture of retinal and 3-dehydroretinal (By similarity). Light-induced isomerization of 11-cis to all-trans retinal triggers a conformational change that activates signaling via G-proteins. Subsequent receptor phosphorylation mediates displacement of the bound G-protein alpha subunit by arrestin and terminates signaling (By similarity).</text>
</comment>
<comment type="subcellular location">
    <subcellularLocation>
        <location evidence="2">Membrane</location>
        <topology evidence="2">Multi-pass membrane protein</topology>
    </subcellularLocation>
    <subcellularLocation>
        <location evidence="4">Cell projection</location>
        <location evidence="4">Cilium</location>
        <location evidence="4">Photoreceptor outer segment</location>
    </subcellularLocation>
    <text evidence="2">Synthesized in the inner segment (IS) of rod photoreceptor cells before vectorial transport to disk membranes in the rod outer segment (OS) photosensory cilia.</text>
</comment>
<comment type="PTM">
    <text evidence="1">Phosphorylated on some or all of the serine and threonine residues present in the C-terminal region.</text>
</comment>
<comment type="PTM">
    <text evidence="1">Contains one covalently linked retinal chromophore.</text>
</comment>
<comment type="similarity">
    <text evidence="5">Belongs to the G-protein coupled receptor 1 family. Opsin subfamily.</text>
</comment>
<organism>
    <name type="scientific">Comephorus dybowskii</name>
    <dbReference type="NCBI Taxonomy" id="61641"/>
    <lineage>
        <taxon>Eukaryota</taxon>
        <taxon>Metazoa</taxon>
        <taxon>Chordata</taxon>
        <taxon>Craniata</taxon>
        <taxon>Vertebrata</taxon>
        <taxon>Euteleostomi</taxon>
        <taxon>Actinopterygii</taxon>
        <taxon>Neopterygii</taxon>
        <taxon>Teleostei</taxon>
        <taxon>Neoteleostei</taxon>
        <taxon>Acanthomorphata</taxon>
        <taxon>Eupercaria</taxon>
        <taxon>Perciformes</taxon>
        <taxon>Cottioidei</taxon>
        <taxon>Cottales</taxon>
        <taxon>Cottidae</taxon>
        <taxon>Comephorus</taxon>
    </lineage>
</organism>
<feature type="chain" id="PRO_0000197661" description="Rhodopsin">
    <location>
        <begin position="1" status="less than"/>
        <end position="289" status="greater than"/>
    </location>
</feature>
<feature type="topological domain" description="Extracellular" evidence="6">
    <location>
        <begin position="1" status="less than"/>
        <end position="7"/>
    </location>
</feature>
<feature type="transmembrane region" description="Helical; Name=1" evidence="1">
    <location>
        <begin position="8"/>
        <end position="32"/>
    </location>
</feature>
<feature type="topological domain" description="Cytoplasmic" evidence="6">
    <location>
        <begin position="33"/>
        <end position="44"/>
    </location>
</feature>
<feature type="transmembrane region" description="Helical; Name=2" evidence="1">
    <location>
        <begin position="45"/>
        <end position="67"/>
    </location>
</feature>
<feature type="topological domain" description="Extracellular" evidence="6">
    <location>
        <begin position="68"/>
        <end position="81"/>
    </location>
</feature>
<feature type="transmembrane region" description="Helical; Name=3" evidence="1">
    <location>
        <begin position="82"/>
        <end position="104"/>
    </location>
</feature>
<feature type="topological domain" description="Cytoplasmic" evidence="6">
    <location>
        <begin position="105"/>
        <end position="123"/>
    </location>
</feature>
<feature type="transmembrane region" description="Helical; Name=4" evidence="1">
    <location>
        <begin position="124"/>
        <end position="144"/>
    </location>
</feature>
<feature type="topological domain" description="Extracellular" evidence="6">
    <location>
        <begin position="145"/>
        <end position="173"/>
    </location>
</feature>
<feature type="transmembrane region" description="Helical; Name=5" evidence="1">
    <location>
        <begin position="174"/>
        <end position="195"/>
    </location>
</feature>
<feature type="topological domain" description="Cytoplasmic" evidence="6">
    <location>
        <begin position="196"/>
        <end position="223"/>
    </location>
</feature>
<feature type="transmembrane region" description="Helical; Name=6" evidence="1">
    <location>
        <begin position="224"/>
        <end position="245"/>
    </location>
</feature>
<feature type="topological domain" description="Extracellular" evidence="6">
    <location>
        <begin position="246"/>
        <end position="257"/>
    </location>
</feature>
<feature type="transmembrane region" description="Helical; Name=7" evidence="1">
    <location>
        <begin position="258"/>
        <end position="279"/>
    </location>
</feature>
<feature type="topological domain" description="Cytoplasmic" evidence="6">
    <location>
        <begin position="280"/>
        <end position="289" status="greater than"/>
    </location>
</feature>
<feature type="short sequence motif" description="'Ionic lock' involved in activated form stabilization" evidence="1">
    <location>
        <begin position="105"/>
        <end position="107"/>
    </location>
</feature>
<feature type="site" description="Plays an important role in the conformation switch to the active conformation" evidence="1">
    <location>
        <position position="84"/>
    </location>
</feature>
<feature type="modified residue" description="N6-(retinylidene)lysine" evidence="1">
    <location>
        <position position="267"/>
    </location>
</feature>
<feature type="disulfide bond" evidence="5">
    <location>
        <begin position="81"/>
        <end position="158"/>
    </location>
</feature>
<feature type="non-terminal residue">
    <location>
        <position position="1"/>
    </location>
</feature>
<feature type="non-terminal residue">
    <location>
        <position position="289"/>
    </location>
</feature>
<reference key="1">
    <citation type="journal article" date="1997" name="Mol. Phylogenet. Evol.">
        <title>Molecular evolution of the cottoid fish endemic to Lake Baikal deduced from nuclear DNA evidence.</title>
        <authorList>
            <person name="Hunt D.M."/>
            <person name="Fitzgibbon J."/>
            <person name="Slobodyanyuk S.J."/>
            <person name="Bowmaker J.K."/>
            <person name="Dulai K.S."/>
        </authorList>
    </citation>
    <scope>NUCLEOTIDE SEQUENCE [GENOMIC DNA]</scope>
</reference>
<dbReference type="EMBL" id="U97274">
    <property type="protein sequence ID" value="AAB61728.1"/>
    <property type="molecule type" value="Genomic_DNA"/>
</dbReference>
<dbReference type="SMR" id="O42327"/>
<dbReference type="GO" id="GO:0016020">
    <property type="term" value="C:membrane"/>
    <property type="evidence" value="ECO:0000250"/>
    <property type="project" value="UniProtKB"/>
</dbReference>
<dbReference type="GO" id="GO:0097381">
    <property type="term" value="C:photoreceptor disc membrane"/>
    <property type="evidence" value="ECO:0000250"/>
    <property type="project" value="UniProtKB"/>
</dbReference>
<dbReference type="GO" id="GO:0005886">
    <property type="term" value="C:plasma membrane"/>
    <property type="evidence" value="ECO:0000250"/>
    <property type="project" value="UniProtKB"/>
</dbReference>
<dbReference type="GO" id="GO:0005502">
    <property type="term" value="F:11-cis retinal binding"/>
    <property type="evidence" value="ECO:0000250"/>
    <property type="project" value="UniProtKB"/>
</dbReference>
<dbReference type="GO" id="GO:0008020">
    <property type="term" value="F:G protein-coupled photoreceptor activity"/>
    <property type="evidence" value="ECO:0000250"/>
    <property type="project" value="UniProtKB"/>
</dbReference>
<dbReference type="GO" id="GO:0016038">
    <property type="term" value="P:absorption of visible light"/>
    <property type="evidence" value="ECO:0000250"/>
    <property type="project" value="UniProtKB"/>
</dbReference>
<dbReference type="GO" id="GO:0016056">
    <property type="term" value="P:G protein-coupled opsin signaling pathway"/>
    <property type="evidence" value="ECO:0000250"/>
    <property type="project" value="UniProtKB"/>
</dbReference>
<dbReference type="GO" id="GO:0007601">
    <property type="term" value="P:visual perception"/>
    <property type="evidence" value="ECO:0007669"/>
    <property type="project" value="UniProtKB-KW"/>
</dbReference>
<dbReference type="CDD" id="cd15080">
    <property type="entry name" value="7tmA_MWS_opsin"/>
    <property type="match status" value="1"/>
</dbReference>
<dbReference type="FunFam" id="1.20.1070.10:FF:000357">
    <property type="entry name" value="Rhodopsin"/>
    <property type="match status" value="1"/>
</dbReference>
<dbReference type="Gene3D" id="1.20.1070.10">
    <property type="entry name" value="Rhodopsin 7-helix transmembrane proteins"/>
    <property type="match status" value="1"/>
</dbReference>
<dbReference type="InterPro" id="IPR050125">
    <property type="entry name" value="GPCR_opsins"/>
</dbReference>
<dbReference type="InterPro" id="IPR000276">
    <property type="entry name" value="GPCR_Rhodpsn"/>
</dbReference>
<dbReference type="InterPro" id="IPR017452">
    <property type="entry name" value="GPCR_Rhodpsn_7TM"/>
</dbReference>
<dbReference type="InterPro" id="IPR001760">
    <property type="entry name" value="Opsin"/>
</dbReference>
<dbReference type="InterPro" id="IPR027430">
    <property type="entry name" value="Retinal_BS"/>
</dbReference>
<dbReference type="InterPro" id="IPR000732">
    <property type="entry name" value="Rhodopsin"/>
</dbReference>
<dbReference type="PANTHER" id="PTHR24240">
    <property type="entry name" value="OPSIN"/>
    <property type="match status" value="1"/>
</dbReference>
<dbReference type="Pfam" id="PF00001">
    <property type="entry name" value="7tm_1"/>
    <property type="match status" value="1"/>
</dbReference>
<dbReference type="PRINTS" id="PR00237">
    <property type="entry name" value="GPCRRHODOPSN"/>
</dbReference>
<dbReference type="PRINTS" id="PR00238">
    <property type="entry name" value="OPSIN"/>
</dbReference>
<dbReference type="PRINTS" id="PR00579">
    <property type="entry name" value="RHODOPSIN"/>
</dbReference>
<dbReference type="SUPFAM" id="SSF81321">
    <property type="entry name" value="Family A G protein-coupled receptor-like"/>
    <property type="match status" value="1"/>
</dbReference>
<dbReference type="PROSITE" id="PS00237">
    <property type="entry name" value="G_PROTEIN_RECEP_F1_1"/>
    <property type="match status" value="1"/>
</dbReference>
<dbReference type="PROSITE" id="PS50262">
    <property type="entry name" value="G_PROTEIN_RECEP_F1_2"/>
    <property type="match status" value="1"/>
</dbReference>
<dbReference type="PROSITE" id="PS00238">
    <property type="entry name" value="OPSIN"/>
    <property type="match status" value="1"/>
</dbReference>
<sequence>YLVNPAAYAALGAYMFLLILIGFPVNFLTLYVTLEHKKLRTPLNYILLNLAVADLFMVLGGFTTTMYTSMHGYFVLGRLGCNLEGFFATLGGEIALWSLVVLAIERWIVVCKPISNFRFTEDHAIMGLAFSWVMALSCSVPPLVGWSRYIPEAMQCSCGVDYYTRAEGFNTESFVLYMFTVHFLIPLSVIFFCYGRLLCAVKEAAAAQQESETTQRSEKEVSRMVVLMVIGFLVCWLPYASTAWWIFCNQGSEFGPVFMTIPAFFAKSSAIYNPMIYICMNKQFRHCMI</sequence>
<proteinExistence type="inferred from homology"/>
<evidence type="ECO:0000250" key="1">
    <source>
        <dbReference type="UniProtKB" id="P02699"/>
    </source>
</evidence>
<evidence type="ECO:0000250" key="2">
    <source>
        <dbReference type="UniProtKB" id="P08100"/>
    </source>
</evidence>
<evidence type="ECO:0000250" key="3">
    <source>
        <dbReference type="UniProtKB" id="P32309"/>
    </source>
</evidence>
<evidence type="ECO:0000250" key="4">
    <source>
        <dbReference type="UniProtKB" id="P35359"/>
    </source>
</evidence>
<evidence type="ECO:0000255" key="5">
    <source>
        <dbReference type="PROSITE-ProRule" id="PRU00521"/>
    </source>
</evidence>
<evidence type="ECO:0000305" key="6"/>
<protein>
    <recommendedName>
        <fullName>Rhodopsin</fullName>
    </recommendedName>
</protein>
<name>OPSD_COMDY</name>